<keyword id="KW-0031">Aminopeptidase</keyword>
<keyword id="KW-0963">Cytoplasm</keyword>
<keyword id="KW-0378">Hydrolase</keyword>
<keyword id="KW-0479">Metal-binding</keyword>
<keyword id="KW-0482">Metalloprotease</keyword>
<keyword id="KW-0645">Protease</keyword>
<keyword id="KW-0862">Zinc</keyword>
<evidence type="ECO:0000255" key="1">
    <source>
        <dbReference type="HAMAP-Rule" id="MF_00550"/>
    </source>
</evidence>
<evidence type="ECO:0000305" key="2"/>
<feature type="chain" id="PRO_0000274027" description="Peptidase T">
    <location>
        <begin position="1"/>
        <end position="407"/>
    </location>
</feature>
<feature type="active site" evidence="1">
    <location>
        <position position="84"/>
    </location>
</feature>
<feature type="active site" description="Proton acceptor" evidence="1">
    <location>
        <position position="177"/>
    </location>
</feature>
<feature type="binding site" evidence="1">
    <location>
        <position position="82"/>
    </location>
    <ligand>
        <name>Zn(2+)</name>
        <dbReference type="ChEBI" id="CHEBI:29105"/>
        <label>1</label>
    </ligand>
</feature>
<feature type="binding site" evidence="1">
    <location>
        <position position="143"/>
    </location>
    <ligand>
        <name>Zn(2+)</name>
        <dbReference type="ChEBI" id="CHEBI:29105"/>
        <label>1</label>
    </ligand>
</feature>
<feature type="binding site" evidence="1">
    <location>
        <position position="143"/>
    </location>
    <ligand>
        <name>Zn(2+)</name>
        <dbReference type="ChEBI" id="CHEBI:29105"/>
        <label>2</label>
    </ligand>
</feature>
<feature type="binding site" evidence="1">
    <location>
        <position position="178"/>
    </location>
    <ligand>
        <name>Zn(2+)</name>
        <dbReference type="ChEBI" id="CHEBI:29105"/>
        <label>2</label>
    </ligand>
</feature>
<feature type="binding site" evidence="1">
    <location>
        <position position="200"/>
    </location>
    <ligand>
        <name>Zn(2+)</name>
        <dbReference type="ChEBI" id="CHEBI:29105"/>
        <label>1</label>
    </ligand>
</feature>
<feature type="binding site" evidence="1">
    <location>
        <position position="382"/>
    </location>
    <ligand>
        <name>Zn(2+)</name>
        <dbReference type="ChEBI" id="CHEBI:29105"/>
        <label>2</label>
    </ligand>
</feature>
<organism>
    <name type="scientific">Streptococcus pyogenes serotype M4 (strain MGAS10750)</name>
    <dbReference type="NCBI Taxonomy" id="370554"/>
    <lineage>
        <taxon>Bacteria</taxon>
        <taxon>Bacillati</taxon>
        <taxon>Bacillota</taxon>
        <taxon>Bacilli</taxon>
        <taxon>Lactobacillales</taxon>
        <taxon>Streptococcaceae</taxon>
        <taxon>Streptococcus</taxon>
    </lineage>
</organism>
<comment type="function">
    <text evidence="1">Cleaves the N-terminal amino acid of tripeptides.</text>
</comment>
<comment type="catalytic activity">
    <reaction evidence="1">
        <text>Release of the N-terminal residue from a tripeptide.</text>
        <dbReference type="EC" id="3.4.11.4"/>
    </reaction>
</comment>
<comment type="cofactor">
    <cofactor evidence="1">
        <name>Zn(2+)</name>
        <dbReference type="ChEBI" id="CHEBI:29105"/>
    </cofactor>
    <text evidence="1">Binds 2 Zn(2+) ions per subunit.</text>
</comment>
<comment type="subcellular location">
    <subcellularLocation>
        <location evidence="1">Cytoplasm</location>
    </subcellularLocation>
</comment>
<comment type="similarity">
    <text evidence="1">Belongs to the peptidase M20B family.</text>
</comment>
<comment type="sequence caution" evidence="2">
    <conflict type="erroneous initiation">
        <sequence resource="EMBL-CDS" id="ABF37651"/>
    </conflict>
</comment>
<gene>
    <name evidence="1" type="primary">pepT</name>
    <name type="ordered locus">MGAS10750_Spy0701</name>
</gene>
<name>PEPT_STRPF</name>
<dbReference type="EC" id="3.4.11.4" evidence="1"/>
<dbReference type="EMBL" id="CP000262">
    <property type="protein sequence ID" value="ABF37651.1"/>
    <property type="status" value="ALT_INIT"/>
    <property type="molecule type" value="Genomic_DNA"/>
</dbReference>
<dbReference type="SMR" id="Q1J7C3"/>
<dbReference type="MEROPS" id="M20.003"/>
<dbReference type="KEGG" id="spi:MGAS10750_Spy0701"/>
<dbReference type="HOGENOM" id="CLU_053676_0_0_9"/>
<dbReference type="Proteomes" id="UP000002434">
    <property type="component" value="Chromosome"/>
</dbReference>
<dbReference type="GO" id="GO:0005829">
    <property type="term" value="C:cytosol"/>
    <property type="evidence" value="ECO:0007669"/>
    <property type="project" value="TreeGrafter"/>
</dbReference>
<dbReference type="GO" id="GO:0008237">
    <property type="term" value="F:metallopeptidase activity"/>
    <property type="evidence" value="ECO:0007669"/>
    <property type="project" value="UniProtKB-KW"/>
</dbReference>
<dbReference type="GO" id="GO:0045148">
    <property type="term" value="F:tripeptide aminopeptidase activity"/>
    <property type="evidence" value="ECO:0007669"/>
    <property type="project" value="UniProtKB-UniRule"/>
</dbReference>
<dbReference type="GO" id="GO:0008270">
    <property type="term" value="F:zinc ion binding"/>
    <property type="evidence" value="ECO:0007669"/>
    <property type="project" value="UniProtKB-UniRule"/>
</dbReference>
<dbReference type="GO" id="GO:0043171">
    <property type="term" value="P:peptide catabolic process"/>
    <property type="evidence" value="ECO:0007669"/>
    <property type="project" value="UniProtKB-UniRule"/>
</dbReference>
<dbReference type="GO" id="GO:0006508">
    <property type="term" value="P:proteolysis"/>
    <property type="evidence" value="ECO:0007669"/>
    <property type="project" value="UniProtKB-UniRule"/>
</dbReference>
<dbReference type="CDD" id="cd03892">
    <property type="entry name" value="M20_peptT"/>
    <property type="match status" value="1"/>
</dbReference>
<dbReference type="FunFam" id="3.30.70.360:FF:000002">
    <property type="entry name" value="Peptidase T"/>
    <property type="match status" value="1"/>
</dbReference>
<dbReference type="Gene3D" id="3.30.70.360">
    <property type="match status" value="1"/>
</dbReference>
<dbReference type="Gene3D" id="3.40.630.10">
    <property type="entry name" value="Zn peptidases"/>
    <property type="match status" value="1"/>
</dbReference>
<dbReference type="HAMAP" id="MF_00550">
    <property type="entry name" value="Aminopeptidase_M20"/>
    <property type="match status" value="1"/>
</dbReference>
<dbReference type="InterPro" id="IPR001261">
    <property type="entry name" value="ArgE/DapE_CS"/>
</dbReference>
<dbReference type="InterPro" id="IPR036264">
    <property type="entry name" value="Bact_exopeptidase_dim_dom"/>
</dbReference>
<dbReference type="InterPro" id="IPR002933">
    <property type="entry name" value="Peptidase_M20"/>
</dbReference>
<dbReference type="InterPro" id="IPR011650">
    <property type="entry name" value="Peptidase_M20_dimer"/>
</dbReference>
<dbReference type="InterPro" id="IPR010161">
    <property type="entry name" value="Peptidase_M20B"/>
</dbReference>
<dbReference type="NCBIfam" id="TIGR01882">
    <property type="entry name" value="peptidase-T"/>
    <property type="match status" value="1"/>
</dbReference>
<dbReference type="NCBIfam" id="NF003976">
    <property type="entry name" value="PRK05469.1"/>
    <property type="match status" value="1"/>
</dbReference>
<dbReference type="NCBIfam" id="NF009920">
    <property type="entry name" value="PRK13381.1"/>
    <property type="match status" value="1"/>
</dbReference>
<dbReference type="PANTHER" id="PTHR42994">
    <property type="entry name" value="PEPTIDASE T"/>
    <property type="match status" value="1"/>
</dbReference>
<dbReference type="PANTHER" id="PTHR42994:SF1">
    <property type="entry name" value="PEPTIDASE T"/>
    <property type="match status" value="1"/>
</dbReference>
<dbReference type="Pfam" id="PF07687">
    <property type="entry name" value="M20_dimer"/>
    <property type="match status" value="1"/>
</dbReference>
<dbReference type="Pfam" id="PF01546">
    <property type="entry name" value="Peptidase_M20"/>
    <property type="match status" value="1"/>
</dbReference>
<dbReference type="PIRSF" id="PIRSF037215">
    <property type="entry name" value="Peptidase_M20B"/>
    <property type="match status" value="1"/>
</dbReference>
<dbReference type="SUPFAM" id="SSF55031">
    <property type="entry name" value="Bacterial exopeptidase dimerisation domain"/>
    <property type="match status" value="1"/>
</dbReference>
<dbReference type="SUPFAM" id="SSF53187">
    <property type="entry name" value="Zn-dependent exopeptidases"/>
    <property type="match status" value="1"/>
</dbReference>
<dbReference type="PROSITE" id="PS00758">
    <property type="entry name" value="ARGE_DAPE_CPG2_1"/>
    <property type="match status" value="1"/>
</dbReference>
<dbReference type="PROSITE" id="PS00759">
    <property type="entry name" value="ARGE_DAPE_CPG2_2"/>
    <property type="match status" value="1"/>
</dbReference>
<accession>Q1J7C3</accession>
<sequence length="407" mass="45028">MKYDNLLDRFIKYVKVNTRSDPDSETTPSTESQEAFALTILKPEMEAIGLQDVHYNPVNGYLIGTLPANNPTLTRKIGFIAHMDTADFNAENVNPQIIDNYQGGDITLGSSNYKLDPKAFPNLNNYIGQTLITTDGTTLLGADDKSGIAEIMTAIEFLTSQPQIEHCDIKVAFGPDEEIGVGADKFEVADFEVDFAYTMDGGPLGELQYETFSAAALEVTFLGRNVHPGTAKDQMINALQLAIDFHEKLPAKERPEYTDGYQGFYHLTGLTGTVEEARASYIIRDFEEASFEARKVKVENIAQSMNAQLGTKRVLVELNDQYYNMKKVIEKDMTAIELAKEVMEELTIKPVIEPIRGGTDGSKISFMGIPTPNIFAGGENMHGRFEFVSLQTMERAVDVIIGLVCKA</sequence>
<proteinExistence type="inferred from homology"/>
<protein>
    <recommendedName>
        <fullName evidence="1">Peptidase T</fullName>
        <ecNumber evidence="1">3.4.11.4</ecNumber>
    </recommendedName>
    <alternativeName>
        <fullName evidence="1">Aminotripeptidase</fullName>
        <shortName evidence="1">Tripeptidase</shortName>
    </alternativeName>
    <alternativeName>
        <fullName evidence="1">Tripeptide aminopeptidase</fullName>
    </alternativeName>
</protein>
<reference key="1">
    <citation type="journal article" date="2006" name="Proc. Natl. Acad. Sci. U.S.A.">
        <title>Molecular genetic anatomy of inter- and intraserotype variation in the human bacterial pathogen group A Streptococcus.</title>
        <authorList>
            <person name="Beres S.B."/>
            <person name="Richter E.W."/>
            <person name="Nagiec M.J."/>
            <person name="Sumby P."/>
            <person name="Porcella S.F."/>
            <person name="DeLeo F.R."/>
            <person name="Musser J.M."/>
        </authorList>
    </citation>
    <scope>NUCLEOTIDE SEQUENCE [LARGE SCALE GENOMIC DNA]</scope>
    <source>
        <strain>MGAS10750</strain>
    </source>
</reference>